<feature type="chain" id="PRO_0000188986" description="Caltrin-like protein 2">
    <location>
        <begin position="1"/>
        <end position="55"/>
    </location>
</feature>
<feature type="domain" description="WAP" evidence="1">
    <location>
        <begin position="7"/>
        <end position="55"/>
    </location>
</feature>
<proteinExistence type="evidence at protein level"/>
<dbReference type="PIR" id="B35752">
    <property type="entry name" value="B35752"/>
</dbReference>
<dbReference type="SMR" id="P22075"/>
<dbReference type="STRING" id="10141.ENSCPOP00000001647"/>
<dbReference type="MEROPS" id="I17.002"/>
<dbReference type="HOGENOM" id="CLU_2653759_0_0_1"/>
<dbReference type="InParanoid" id="P22075"/>
<dbReference type="Proteomes" id="UP000005447">
    <property type="component" value="Unassembled WGS sequence"/>
</dbReference>
<dbReference type="GO" id="GO:0005576">
    <property type="term" value="C:extracellular region"/>
    <property type="evidence" value="ECO:0007669"/>
    <property type="project" value="InterPro"/>
</dbReference>
<dbReference type="GO" id="GO:0030414">
    <property type="term" value="F:peptidase inhibitor activity"/>
    <property type="evidence" value="ECO:0007669"/>
    <property type="project" value="InterPro"/>
</dbReference>
<dbReference type="CDD" id="cd00199">
    <property type="entry name" value="WAP"/>
    <property type="match status" value="1"/>
</dbReference>
<dbReference type="FunFam" id="4.10.75.10:FF:000001">
    <property type="entry name" value="Anosmin 1"/>
    <property type="match status" value="1"/>
</dbReference>
<dbReference type="Gene3D" id="4.10.75.10">
    <property type="entry name" value="Elafin-like"/>
    <property type="match status" value="1"/>
</dbReference>
<dbReference type="InterPro" id="IPR036645">
    <property type="entry name" value="Elafin-like_sf"/>
</dbReference>
<dbReference type="InterPro" id="IPR008197">
    <property type="entry name" value="WAP_dom"/>
</dbReference>
<dbReference type="Pfam" id="PF00095">
    <property type="entry name" value="WAP"/>
    <property type="match status" value="1"/>
</dbReference>
<dbReference type="PRINTS" id="PR00003">
    <property type="entry name" value="4DISULPHCORE"/>
</dbReference>
<dbReference type="SMART" id="SM00217">
    <property type="entry name" value="WAP"/>
    <property type="match status" value="1"/>
</dbReference>
<dbReference type="SUPFAM" id="SSF57256">
    <property type="entry name" value="Elafin-like"/>
    <property type="match status" value="1"/>
</dbReference>
<dbReference type="PROSITE" id="PS51390">
    <property type="entry name" value="WAP"/>
    <property type="match status" value="1"/>
</dbReference>
<keyword id="KW-0106">Calcium</keyword>
<keyword id="KW-0903">Direct protein sequencing</keyword>
<keyword id="KW-0325">Glycoprotein</keyword>
<keyword id="KW-1185">Reference proteome</keyword>
<reference key="1">
    <citation type="journal article" date="1990" name="J. Biol. Chem.">
        <title>Purification and structure of caltrin-like proteins from seminal vesicle of the guinea pig.</title>
        <authorList>
            <person name="Coronel C.E."/>
            <person name="San Agustin J."/>
            <person name="Lardy H.A."/>
        </authorList>
    </citation>
    <scope>PROTEIN SEQUENCE</scope>
    <source>
        <tissue>Seminal vesicle</tissue>
    </source>
</reference>
<comment type="function">
    <text>Inhibits calcium transport into spermatozoa.</text>
</comment>
<comment type="PTM">
    <text>Glycosylated.</text>
</comment>
<evidence type="ECO:0000255" key="1">
    <source>
        <dbReference type="PROSITE-ProRule" id="PRU00722"/>
    </source>
</evidence>
<sequence>RRLHGQAINRPGSCPRVMIYCPARHPPNKCTSDYDCPKPQKCCPGYCGKQCYQPE</sequence>
<name>CALU_CAVPO</name>
<organism>
    <name type="scientific">Cavia porcellus</name>
    <name type="common">Guinea pig</name>
    <dbReference type="NCBI Taxonomy" id="10141"/>
    <lineage>
        <taxon>Eukaryota</taxon>
        <taxon>Metazoa</taxon>
        <taxon>Chordata</taxon>
        <taxon>Craniata</taxon>
        <taxon>Vertebrata</taxon>
        <taxon>Euteleostomi</taxon>
        <taxon>Mammalia</taxon>
        <taxon>Eutheria</taxon>
        <taxon>Euarchontoglires</taxon>
        <taxon>Glires</taxon>
        <taxon>Rodentia</taxon>
        <taxon>Hystricomorpha</taxon>
        <taxon>Caviidae</taxon>
        <taxon>Cavia</taxon>
    </lineage>
</organism>
<accession>P22075</accession>
<protein>
    <recommendedName>
        <fullName>Caltrin-like protein 2</fullName>
    </recommendedName>
    <alternativeName>
        <fullName>Caltrin-like protein II</fullName>
    </alternativeName>
</protein>